<feature type="chain" id="PRO_0000054294" description="Alpha-amylase isozyme C">
    <location>
        <begin position="1"/>
        <end position="348"/>
    </location>
</feature>
<feature type="region of interest" description="Disordered" evidence="2">
    <location>
        <begin position="126"/>
        <end position="266"/>
    </location>
</feature>
<feature type="compositionally biased region" description="Basic residues" evidence="2">
    <location>
        <begin position="145"/>
        <end position="160"/>
    </location>
</feature>
<feature type="compositionally biased region" description="Low complexity" evidence="2">
    <location>
        <begin position="161"/>
        <end position="188"/>
    </location>
</feature>
<feature type="compositionally biased region" description="Polar residues" evidence="2">
    <location>
        <begin position="189"/>
        <end position="207"/>
    </location>
</feature>
<feature type="compositionally biased region" description="Low complexity" evidence="2">
    <location>
        <begin position="223"/>
        <end position="266"/>
    </location>
</feature>
<feature type="binding site" evidence="1">
    <location>
        <begin position="87"/>
        <end position="88"/>
    </location>
    <ligand>
        <name>substrate</name>
    </ligand>
</feature>
<feature type="binding site" evidence="1">
    <location>
        <position position="116"/>
    </location>
    <ligand>
        <name>Ca(2+)</name>
        <dbReference type="ChEBI" id="CHEBI:29108"/>
    </ligand>
</feature>
<feature type="binding site" evidence="1">
    <location>
        <begin position="182"/>
        <end position="187"/>
    </location>
    <ligand>
        <name>substrate</name>
    </ligand>
</feature>
<feature type="binding site" evidence="1">
    <location>
        <position position="188"/>
    </location>
    <ligand>
        <name>Ca(2+)</name>
        <dbReference type="ChEBI" id="CHEBI:29108"/>
    </ligand>
</feature>
<feature type="binding site" evidence="1">
    <location>
        <position position="214"/>
    </location>
    <ligand>
        <name>substrate</name>
    </ligand>
</feature>
<feature type="binding site" evidence="1">
    <location>
        <position position="283"/>
    </location>
    <ligand>
        <name>substrate</name>
    </ligand>
</feature>
<feature type="binding site" evidence="1">
    <location>
        <begin position="289"/>
        <end position="291"/>
    </location>
    <ligand>
        <name>substrate</name>
    </ligand>
</feature>
<feature type="binding site" evidence="1">
    <location>
        <position position="302"/>
    </location>
    <ligand>
        <name>substrate</name>
    </ligand>
</feature>
<feature type="binding site" evidence="1">
    <location>
        <position position="344"/>
    </location>
    <ligand>
        <name>substrate</name>
    </ligand>
</feature>
<feature type="site" description="Transition state stabilizer" evidence="1">
    <location>
        <position position="303"/>
    </location>
</feature>
<comment type="function">
    <text>Important for breakdown of endosperm starch during germination.</text>
</comment>
<comment type="catalytic activity">
    <reaction>
        <text>Endohydrolysis of (1-&gt;4)-alpha-D-glucosidic linkages in polysaccharides containing three or more (1-&gt;4)-alpha-linked D-glucose units.</text>
        <dbReference type="EC" id="3.2.1.1"/>
    </reaction>
</comment>
<comment type="cofactor">
    <cofactor evidence="1">
        <name>Ca(2+)</name>
        <dbReference type="ChEBI" id="CHEBI:29108"/>
    </cofactor>
    <text evidence="1">Binds 3 Ca(2+) ions per subunit.</text>
</comment>
<comment type="subunit">
    <text evidence="1">Monomer.</text>
</comment>
<comment type="tissue specificity">
    <text evidence="3">In callus, weakly expressed.</text>
</comment>
<comment type="developmental stage">
    <text evidence="3">Expressed at a high level during germination in the aleurones cells under the control of the plant hormone gibberellic acid and in the developing grains at a low level.</text>
</comment>
<comment type="similarity">
    <text evidence="4">Belongs to the glycosyl hydrolase 13 family.</text>
</comment>
<comment type="sequence caution" evidence="4">
    <conflict type="frameshift">
        <sequence resource="EMBL-CDS" id="AAA33893"/>
    </conflict>
</comment>
<comment type="sequence caution" evidence="4">
    <conflict type="miscellaneous discrepancy">
        <sequence resource="EMBL-CDS" id="AAA33893"/>
    </conflict>
    <text>Sequencing errors.</text>
</comment>
<comment type="sequence caution" evidence="4">
    <conflict type="erroneous gene model prediction">
        <sequence resource="EMBL-CDS" id="BAD52958"/>
    </conflict>
</comment>
<comment type="sequence caution" evidence="4">
    <conflict type="erroneous gene model prediction">
        <sequence resource="EMBL-CDS" id="BAD53075"/>
    </conflict>
</comment>
<keyword id="KW-0106">Calcium</keyword>
<keyword id="KW-0119">Carbohydrate metabolism</keyword>
<keyword id="KW-0326">Glycosidase</keyword>
<keyword id="KW-0378">Hydrolase</keyword>
<keyword id="KW-0479">Metal-binding</keyword>
<keyword id="KW-1185">Reference proteome</keyword>
<gene>
    <name type="primary">AMY1B</name>
    <name type="synonym">AMYC</name>
    <name type="ordered locus">Os01g0357400</name>
    <name type="ordered locus">LOC_Os01g25510</name>
    <name type="ORF">P0025H06.22</name>
    <name type="ORF">P0514H03.1</name>
</gene>
<sequence length="348" mass="38478">MQVPIEHNGGEQTLLVPFRAHRPPRPLLQLGSRASPVSGFQLGVVEGEWRVVQPAYGQARWTTSPPPASPTSGSLRRPTLSASKATCWGGCTIWTRPIIEAFHGKGVQVIADIVINHRTAEHKDSRGIYCRLPPRLGPAHDLPRRPLRRRHRKPGHRRRTSTTSTSASSGSSSAGSTGSRWTSASTRGASTSPRATPPTWQRSTSMPPSRASPWPRYGRRWRTAGTASRTTTRTRTGRSWSTGSIVSAAPTAMPRRSTSPPRASSTSPWRAIELWRLRGEDGKAPGMIGWWPAKATTFVDNHDTGNPCIFYDHFFDWGLKDEIERLVSIRNRQGIHPARGRCCWLLPS</sequence>
<evidence type="ECO:0000250" key="1"/>
<evidence type="ECO:0000256" key="2">
    <source>
        <dbReference type="SAM" id="MobiDB-lite"/>
    </source>
</evidence>
<evidence type="ECO:0000269" key="3">
    <source>
    </source>
</evidence>
<evidence type="ECO:0000305" key="4"/>
<organism>
    <name type="scientific">Oryza sativa subsp. japonica</name>
    <name type="common">Rice</name>
    <dbReference type="NCBI Taxonomy" id="39947"/>
    <lineage>
        <taxon>Eukaryota</taxon>
        <taxon>Viridiplantae</taxon>
        <taxon>Streptophyta</taxon>
        <taxon>Embryophyta</taxon>
        <taxon>Tracheophyta</taxon>
        <taxon>Spermatophyta</taxon>
        <taxon>Magnoliopsida</taxon>
        <taxon>Liliopsida</taxon>
        <taxon>Poales</taxon>
        <taxon>Poaceae</taxon>
        <taxon>BOP clade</taxon>
        <taxon>Oryzoideae</taxon>
        <taxon>Oryzeae</taxon>
        <taxon>Oryzinae</taxon>
        <taxon>Oryza</taxon>
        <taxon>Oryza sativa</taxon>
    </lineage>
</organism>
<reference key="1">
    <citation type="journal article" date="1990" name="Nucleic Acids Res.">
        <title>Structural organization and differential expression of rice alpha-amylase genes.</title>
        <authorList>
            <person name="Huang N."/>
            <person name="Koizumi N."/>
            <person name="Reinl S.J."/>
            <person name="Rodriguez R.L."/>
        </authorList>
    </citation>
    <scope>NUCLEOTIDE SEQUENCE [GENOMIC DNA]</scope>
    <scope>TISSUE SPECIFICITY</scope>
    <scope>DEVELOPMENTAL STAGE</scope>
    <source>
        <strain>cv. M202</strain>
        <tissue>Etiolated leaf</tissue>
    </source>
</reference>
<reference key="2">
    <citation type="journal article" date="2002" name="Nature">
        <title>The genome sequence and structure of rice chromosome 1.</title>
        <authorList>
            <person name="Sasaki T."/>
            <person name="Matsumoto T."/>
            <person name="Yamamoto K."/>
            <person name="Sakata K."/>
            <person name="Baba T."/>
            <person name="Katayose Y."/>
            <person name="Wu J."/>
            <person name="Niimura Y."/>
            <person name="Cheng Z."/>
            <person name="Nagamura Y."/>
            <person name="Antonio B.A."/>
            <person name="Kanamori H."/>
            <person name="Hosokawa S."/>
            <person name="Masukawa M."/>
            <person name="Arikawa K."/>
            <person name="Chiden Y."/>
            <person name="Hayashi M."/>
            <person name="Okamoto M."/>
            <person name="Ando T."/>
            <person name="Aoki H."/>
            <person name="Arita K."/>
            <person name="Hamada M."/>
            <person name="Harada C."/>
            <person name="Hijishita S."/>
            <person name="Honda M."/>
            <person name="Ichikawa Y."/>
            <person name="Idonuma A."/>
            <person name="Iijima M."/>
            <person name="Ikeda M."/>
            <person name="Ikeno M."/>
            <person name="Ito S."/>
            <person name="Ito T."/>
            <person name="Ito Y."/>
            <person name="Ito Y."/>
            <person name="Iwabuchi A."/>
            <person name="Kamiya K."/>
            <person name="Karasawa W."/>
            <person name="Katagiri S."/>
            <person name="Kikuta A."/>
            <person name="Kobayashi N."/>
            <person name="Kono I."/>
            <person name="Machita K."/>
            <person name="Maehara T."/>
            <person name="Mizuno H."/>
            <person name="Mizubayashi T."/>
            <person name="Mukai Y."/>
            <person name="Nagasaki H."/>
            <person name="Nakashima M."/>
            <person name="Nakama Y."/>
            <person name="Nakamichi Y."/>
            <person name="Nakamura M."/>
            <person name="Namiki N."/>
            <person name="Negishi M."/>
            <person name="Ohta I."/>
            <person name="Ono N."/>
            <person name="Saji S."/>
            <person name="Sakai K."/>
            <person name="Shibata M."/>
            <person name="Shimokawa T."/>
            <person name="Shomura A."/>
            <person name="Song J."/>
            <person name="Takazaki Y."/>
            <person name="Terasawa K."/>
            <person name="Tsuji K."/>
            <person name="Waki K."/>
            <person name="Yamagata H."/>
            <person name="Yamane H."/>
            <person name="Yoshiki S."/>
            <person name="Yoshihara R."/>
            <person name="Yukawa K."/>
            <person name="Zhong H."/>
            <person name="Iwama H."/>
            <person name="Endo T."/>
            <person name="Ito H."/>
            <person name="Hahn J.H."/>
            <person name="Kim H.-I."/>
            <person name="Eun M.-Y."/>
            <person name="Yano M."/>
            <person name="Jiang J."/>
            <person name="Gojobori T."/>
        </authorList>
    </citation>
    <scope>NUCLEOTIDE SEQUENCE [LARGE SCALE GENOMIC DNA]</scope>
    <source>
        <strain>cv. Nipponbare</strain>
    </source>
</reference>
<reference key="3">
    <citation type="journal article" date="2005" name="Nature">
        <title>The map-based sequence of the rice genome.</title>
        <authorList>
            <consortium name="International rice genome sequencing project (IRGSP)"/>
        </authorList>
    </citation>
    <scope>NUCLEOTIDE SEQUENCE [LARGE SCALE GENOMIC DNA]</scope>
    <source>
        <strain>cv. Nipponbare</strain>
    </source>
</reference>
<reference key="4">
    <citation type="journal article" date="2008" name="Nucleic Acids Res.">
        <title>The rice annotation project database (RAP-DB): 2008 update.</title>
        <authorList>
            <consortium name="The rice annotation project (RAP)"/>
        </authorList>
    </citation>
    <scope>GENOME REANNOTATION</scope>
    <source>
        <strain>cv. Nipponbare</strain>
    </source>
</reference>
<reference key="5">
    <citation type="journal article" date="2013" name="Rice">
        <title>Improvement of the Oryza sativa Nipponbare reference genome using next generation sequence and optical map data.</title>
        <authorList>
            <person name="Kawahara Y."/>
            <person name="de la Bastide M."/>
            <person name="Hamilton J.P."/>
            <person name="Kanamori H."/>
            <person name="McCombie W.R."/>
            <person name="Ouyang S."/>
            <person name="Schwartz D.C."/>
            <person name="Tanaka T."/>
            <person name="Wu J."/>
            <person name="Zhou S."/>
            <person name="Childs K.L."/>
            <person name="Davidson R.M."/>
            <person name="Lin H."/>
            <person name="Quesada-Ocampo L."/>
            <person name="Vaillancourt B."/>
            <person name="Sakai H."/>
            <person name="Lee S.S."/>
            <person name="Kim J."/>
            <person name="Numa H."/>
            <person name="Itoh T."/>
            <person name="Buell C.R."/>
            <person name="Matsumoto T."/>
        </authorList>
    </citation>
    <scope>GENOME REANNOTATION</scope>
    <source>
        <strain>cv. Nipponbare</strain>
    </source>
</reference>
<reference key="6">
    <citation type="journal article" date="2003" name="Science">
        <title>Collection, mapping, and annotation of over 28,000 cDNA clones from japonica rice.</title>
        <authorList>
            <consortium name="The rice full-length cDNA consortium"/>
        </authorList>
    </citation>
    <scope>NUCLEOTIDE SEQUENCE [LARGE SCALE MRNA]</scope>
    <source>
        <strain>cv. Nipponbare</strain>
    </source>
</reference>
<name>AMYC1_ORYSJ</name>
<proteinExistence type="evidence at transcript level"/>
<accession>Q0JMV4</accession>
<accession>P27940</accession>
<accession>Q5ZBK1</accession>
<protein>
    <recommendedName>
        <fullName>Alpha-amylase isozyme C</fullName>
        <ecNumber>3.2.1.1</ecNumber>
    </recommendedName>
    <alternativeName>
        <fullName>1,4-alpha-D-glucan glucanohydrolase</fullName>
    </alternativeName>
    <alternativeName>
        <fullName>Alpha-amylase isozyme 1B</fullName>
    </alternativeName>
</protein>
<dbReference type="EC" id="3.2.1.1"/>
<dbReference type="EMBL" id="M59350">
    <property type="protein sequence ID" value="AAA33893.1"/>
    <property type="status" value="ALT_SEQ"/>
    <property type="molecule type" value="Genomic_DNA"/>
</dbReference>
<dbReference type="EMBL" id="AP003275">
    <property type="protein sequence ID" value="BAD52958.1"/>
    <property type="status" value="ALT_SEQ"/>
    <property type="molecule type" value="Genomic_DNA"/>
</dbReference>
<dbReference type="EMBL" id="AP003312">
    <property type="protein sequence ID" value="BAD53075.1"/>
    <property type="status" value="ALT_SEQ"/>
    <property type="molecule type" value="Genomic_DNA"/>
</dbReference>
<dbReference type="EMBL" id="AP008207">
    <property type="protein sequence ID" value="BAF04924.1"/>
    <property type="molecule type" value="Genomic_DNA"/>
</dbReference>
<dbReference type="EMBL" id="AP014957">
    <property type="status" value="NOT_ANNOTATED_CDS"/>
    <property type="molecule type" value="Genomic_DNA"/>
</dbReference>
<dbReference type="EMBL" id="AK063489">
    <property type="status" value="NOT_ANNOTATED_CDS"/>
    <property type="molecule type" value="mRNA"/>
</dbReference>
<dbReference type="SMR" id="Q0JMV4"/>
<dbReference type="FunCoup" id="Q0JMV4">
    <property type="interactions" value="55"/>
</dbReference>
<dbReference type="STRING" id="39947.Q0JMV4"/>
<dbReference type="PaxDb" id="39947-Q0JMV4"/>
<dbReference type="KEGG" id="dosa:Os01g0357400"/>
<dbReference type="InParanoid" id="Q0JMV4"/>
<dbReference type="Proteomes" id="UP000000763">
    <property type="component" value="Chromosome 1"/>
</dbReference>
<dbReference type="Proteomes" id="UP000059680">
    <property type="component" value="Chromosome 1"/>
</dbReference>
<dbReference type="GO" id="GO:0004556">
    <property type="term" value="F:alpha-amylase activity"/>
    <property type="evidence" value="ECO:0000318"/>
    <property type="project" value="GO_Central"/>
</dbReference>
<dbReference type="GO" id="GO:0046872">
    <property type="term" value="F:metal ion binding"/>
    <property type="evidence" value="ECO:0007669"/>
    <property type="project" value="UniProtKB-KW"/>
</dbReference>
<dbReference type="GO" id="GO:0005987">
    <property type="term" value="P:sucrose catabolic process"/>
    <property type="evidence" value="ECO:0000318"/>
    <property type="project" value="GO_Central"/>
</dbReference>
<dbReference type="Gene3D" id="3.20.20.80">
    <property type="entry name" value="Glycosidases"/>
    <property type="match status" value="2"/>
</dbReference>
<dbReference type="InterPro" id="IPR017853">
    <property type="entry name" value="Glycoside_hydrolase_SF"/>
</dbReference>
<dbReference type="PANTHER" id="PTHR43447">
    <property type="entry name" value="ALPHA-AMYLASE"/>
    <property type="match status" value="1"/>
</dbReference>
<dbReference type="SUPFAM" id="SSF51445">
    <property type="entry name" value="(Trans)glycosidases"/>
    <property type="match status" value="1"/>
</dbReference>